<organism>
    <name type="scientific">Escherichia coli (strain ATCC 8739 / DSM 1576 / NBRC 3972 / NCIMB 8545 / WDCM 00012 / Crooks)</name>
    <dbReference type="NCBI Taxonomy" id="481805"/>
    <lineage>
        <taxon>Bacteria</taxon>
        <taxon>Pseudomonadati</taxon>
        <taxon>Pseudomonadota</taxon>
        <taxon>Gammaproteobacteria</taxon>
        <taxon>Enterobacterales</taxon>
        <taxon>Enterobacteriaceae</taxon>
        <taxon>Escherichia</taxon>
    </lineage>
</organism>
<name>CITX_ECOLC</name>
<accession>B1IYJ2</accession>
<proteinExistence type="inferred from homology"/>
<evidence type="ECO:0000255" key="1">
    <source>
        <dbReference type="HAMAP-Rule" id="MF_00398"/>
    </source>
</evidence>
<keyword id="KW-0548">Nucleotidyltransferase</keyword>
<keyword id="KW-0808">Transferase</keyword>
<dbReference type="EC" id="2.7.7.61" evidence="1"/>
<dbReference type="EMBL" id="CP000946">
    <property type="protein sequence ID" value="ACA78654.1"/>
    <property type="molecule type" value="Genomic_DNA"/>
</dbReference>
<dbReference type="RefSeq" id="WP_000550414.1">
    <property type="nucleotide sequence ID" value="NZ_MTFT01000005.1"/>
</dbReference>
<dbReference type="SMR" id="B1IYJ2"/>
<dbReference type="KEGG" id="ecl:EcolC_3030"/>
<dbReference type="HOGENOM" id="CLU_104529_1_1_6"/>
<dbReference type="GO" id="GO:0050519">
    <property type="term" value="F:holo-citrate lyase synthase activity"/>
    <property type="evidence" value="ECO:0007669"/>
    <property type="project" value="UniProtKB-UniRule"/>
</dbReference>
<dbReference type="GO" id="GO:0051191">
    <property type="term" value="P:prosthetic group biosynthetic process"/>
    <property type="evidence" value="ECO:0007669"/>
    <property type="project" value="InterPro"/>
</dbReference>
<dbReference type="HAMAP" id="MF_00398">
    <property type="entry name" value="CitX"/>
    <property type="match status" value="1"/>
</dbReference>
<dbReference type="InterPro" id="IPR005551">
    <property type="entry name" value="CitX"/>
</dbReference>
<dbReference type="NCBIfam" id="TIGR03124">
    <property type="entry name" value="citrate_citX"/>
    <property type="match status" value="1"/>
</dbReference>
<dbReference type="NCBIfam" id="NF002383">
    <property type="entry name" value="PRK01392.1"/>
    <property type="match status" value="1"/>
</dbReference>
<dbReference type="Pfam" id="PF03802">
    <property type="entry name" value="CitX"/>
    <property type="match status" value="1"/>
</dbReference>
<reference key="1">
    <citation type="submission" date="2008-02" db="EMBL/GenBank/DDBJ databases">
        <title>Complete sequence of Escherichia coli C str. ATCC 8739.</title>
        <authorList>
            <person name="Copeland A."/>
            <person name="Lucas S."/>
            <person name="Lapidus A."/>
            <person name="Glavina del Rio T."/>
            <person name="Dalin E."/>
            <person name="Tice H."/>
            <person name="Bruce D."/>
            <person name="Goodwin L."/>
            <person name="Pitluck S."/>
            <person name="Kiss H."/>
            <person name="Brettin T."/>
            <person name="Detter J.C."/>
            <person name="Han C."/>
            <person name="Kuske C.R."/>
            <person name="Schmutz J."/>
            <person name="Larimer F."/>
            <person name="Land M."/>
            <person name="Hauser L."/>
            <person name="Kyrpides N."/>
            <person name="Mikhailova N."/>
            <person name="Ingram L."/>
            <person name="Richardson P."/>
        </authorList>
    </citation>
    <scope>NUCLEOTIDE SEQUENCE [LARGE SCALE GENOMIC DNA]</scope>
    <source>
        <strain>ATCC 8739 / DSM 1576 / NBRC 3972 / NCIMB 8545 / WDCM 00012 / Crooks</strain>
    </source>
</reference>
<comment type="function">
    <text evidence="1">Transfers 2-(5''-triphosphoribosyl)-3'-dephosphocoenzyme-A on a serine residue to the apo-acyl carrier protein (gamma chain) of the citrate lyase to yield holo-acyl carrier protein.</text>
</comment>
<comment type="catalytic activity">
    <reaction evidence="1">
        <text>apo-[citrate lyase ACP] + 2'-(5''-triphospho-alpha-D-ribosyl)-3'-dephospho-CoA = holo-[citrate lyase ACP] + diphosphate</text>
        <dbReference type="Rhea" id="RHEA:16333"/>
        <dbReference type="Rhea" id="RHEA-COMP:10157"/>
        <dbReference type="Rhea" id="RHEA-COMP:10158"/>
        <dbReference type="ChEBI" id="CHEBI:29999"/>
        <dbReference type="ChEBI" id="CHEBI:33019"/>
        <dbReference type="ChEBI" id="CHEBI:61378"/>
        <dbReference type="ChEBI" id="CHEBI:82683"/>
        <dbReference type="EC" id="2.7.7.61"/>
    </reaction>
</comment>
<comment type="similarity">
    <text evidence="1">Belongs to the CitX family.</text>
</comment>
<feature type="chain" id="PRO_1000080329" description="Apo-citrate lyase phosphoribosyl-dephospho-CoA transferase">
    <location>
        <begin position="1"/>
        <end position="183"/>
    </location>
</feature>
<protein>
    <recommendedName>
        <fullName>Apo-citrate lyase phosphoribosyl-dephospho-CoA transferase</fullName>
        <ecNumber evidence="1">2.7.7.61</ecNumber>
    </recommendedName>
    <alternativeName>
        <fullName evidence="1">Apo-ACP nucleodityltransferase</fullName>
    </alternativeName>
    <alternativeName>
        <fullName evidence="1">Holo-ACP synthase</fullName>
    </alternativeName>
    <alternativeName>
        <fullName evidence="1">Holo-citrate lyase synthase</fullName>
    </alternativeName>
</protein>
<gene>
    <name evidence="1" type="primary">citX</name>
    <name type="ordered locus">EcolC_3030</name>
</gene>
<sequence length="183" mass="20286">MHLLPELASHHAVSIPELLVSRDERQARQHVWLKRHPVPLVSFTVVAPGPIKDCEVTRRIFNHGVTALRALAAKQGWQIQEQAALVSASGPEGMLSIAAPARDLKLATIELEHSHPLGRLWDIDVLTPEGEILSRRDYSLPPRRCLLCEQSAAVCARGKTHQLTDLLNRMEALLNDVDACNVN</sequence>